<keyword id="KW-0028">Amino-acid biosynthesis</keyword>
<keyword id="KW-0100">Branched-chain amino acid biosynthesis</keyword>
<keyword id="KW-0432">Leucine biosynthesis</keyword>
<keyword id="KW-0479">Metal-binding</keyword>
<keyword id="KW-1185">Reference proteome</keyword>
<keyword id="KW-0808">Transferase</keyword>
<evidence type="ECO:0000250" key="1">
    <source>
        <dbReference type="UniProtKB" id="P9WQB3"/>
    </source>
</evidence>
<evidence type="ECO:0000250" key="2">
    <source>
        <dbReference type="UniProtKB" id="Q9JZG1"/>
    </source>
</evidence>
<evidence type="ECO:0000255" key="3">
    <source>
        <dbReference type="PROSITE-ProRule" id="PRU01151"/>
    </source>
</evidence>
<evidence type="ECO:0000269" key="4">
    <source>
    </source>
</evidence>
<evidence type="ECO:0000305" key="5"/>
<organism>
    <name type="scientific">Methanocaldococcus jannaschii (strain ATCC 43067 / DSM 2661 / JAL-1 / JCM 10045 / NBRC 100440)</name>
    <name type="common">Methanococcus jannaschii</name>
    <dbReference type="NCBI Taxonomy" id="243232"/>
    <lineage>
        <taxon>Archaea</taxon>
        <taxon>Methanobacteriati</taxon>
        <taxon>Methanobacteriota</taxon>
        <taxon>Methanomada group</taxon>
        <taxon>Methanococci</taxon>
        <taxon>Methanococcales</taxon>
        <taxon>Methanocaldococcaceae</taxon>
        <taxon>Methanocaldococcus</taxon>
    </lineage>
</organism>
<gene>
    <name type="primary">leuA</name>
    <name type="ordered locus">MJ1195</name>
</gene>
<feature type="chain" id="PRO_0000140411" description="2-isopropylmalate synthase">
    <location>
        <begin position="1"/>
        <end position="518"/>
    </location>
</feature>
<feature type="domain" description="Pyruvate carboxyltransferase" evidence="3">
    <location>
        <begin position="24"/>
        <end position="275"/>
    </location>
</feature>
<feature type="binding site" evidence="2">
    <location>
        <position position="33"/>
    </location>
    <ligand>
        <name>a divalent metal cation</name>
        <dbReference type="ChEBI" id="CHEBI:60240"/>
    </ligand>
</feature>
<feature type="binding site" evidence="2">
    <location>
        <position position="213"/>
    </location>
    <ligand>
        <name>a divalent metal cation</name>
        <dbReference type="ChEBI" id="CHEBI:60240"/>
    </ligand>
</feature>
<feature type="binding site" evidence="2">
    <location>
        <position position="215"/>
    </location>
    <ligand>
        <name>a divalent metal cation</name>
        <dbReference type="ChEBI" id="CHEBI:60240"/>
    </ligand>
</feature>
<feature type="binding site" evidence="2">
    <location>
        <position position="249"/>
    </location>
    <ligand>
        <name>a divalent metal cation</name>
        <dbReference type="ChEBI" id="CHEBI:60240"/>
    </ligand>
</feature>
<proteinExistence type="evidence at protein level"/>
<sequence>MIIYREENEIIKKALENLNIPDRVYIFDTTLRDGEQTPGVSLTPEEKIDIAIKLDDLGVDVIEAGFPVSSLGEQEAIKKICSLNLDAEICGLARAVKKDIDVAIDCGVDRIHTFIATSPLHRKYKLKKSKEEIIDIAVDAIEYIKEHGIRVEFSAEDATRTEIDYLIEVYKKAVDAGADIINVPDTVGVMIPRAMYYLINELKKEIKVPISVHCHNDFGLAVANSLAAVEAGAEQVHCTINGLGERGGNAALEEVVMSLMSIYGVKTNIKTQKLYEISQLVSKYTEIKVQPNKAIVGENAFAHESGIHAHGVLAHALTYEPIPPELVGQKRKIILGKHTGTHAIEAKLKELGIEVGKDINKDQFDEIVKRIKALGDKGKRVTDRDVEAIVEDVVGKLAKKDRVVELEQIAVMTGNRVIPTASVALKIEEEIKKSSAIGVGPVDAAVKAIQKAIGEKIKLKEYHINAITGGTDALAEVIVTLEGYGREITTKAASEDIVRASVEAVIDGINKILAKREK</sequence>
<protein>
    <recommendedName>
        <fullName>2-isopropylmalate synthase</fullName>
        <ecNumber>2.3.3.13</ecNumber>
    </recommendedName>
    <alternativeName>
        <fullName>Alpha-IPM synthase</fullName>
    </alternativeName>
    <alternativeName>
        <fullName>Alpha-isopropylmalate synthase</fullName>
    </alternativeName>
</protein>
<accession>Q58595</accession>
<reference key="1">
    <citation type="journal article" date="1996" name="Science">
        <title>Complete genome sequence of the methanogenic archaeon, Methanococcus jannaschii.</title>
        <authorList>
            <person name="Bult C.J."/>
            <person name="White O."/>
            <person name="Olsen G.J."/>
            <person name="Zhou L."/>
            <person name="Fleischmann R.D."/>
            <person name="Sutton G.G."/>
            <person name="Blake J.A."/>
            <person name="FitzGerald L.M."/>
            <person name="Clayton R.A."/>
            <person name="Gocayne J.D."/>
            <person name="Kerlavage A.R."/>
            <person name="Dougherty B.A."/>
            <person name="Tomb J.-F."/>
            <person name="Adams M.D."/>
            <person name="Reich C.I."/>
            <person name="Overbeek R."/>
            <person name="Kirkness E.F."/>
            <person name="Weinstock K.G."/>
            <person name="Merrick J.M."/>
            <person name="Glodek A."/>
            <person name="Scott J.L."/>
            <person name="Geoghagen N.S.M."/>
            <person name="Weidman J.F."/>
            <person name="Fuhrmann J.L."/>
            <person name="Nguyen D."/>
            <person name="Utterback T.R."/>
            <person name="Kelley J.M."/>
            <person name="Peterson J.D."/>
            <person name="Sadow P.W."/>
            <person name="Hanna M.C."/>
            <person name="Cotton M.D."/>
            <person name="Roberts K.M."/>
            <person name="Hurst M.A."/>
            <person name="Kaine B.P."/>
            <person name="Borodovsky M."/>
            <person name="Klenk H.-P."/>
            <person name="Fraser C.M."/>
            <person name="Smith H.O."/>
            <person name="Woese C.R."/>
            <person name="Venter J.C."/>
        </authorList>
    </citation>
    <scope>NUCLEOTIDE SEQUENCE [LARGE SCALE GENOMIC DNA]</scope>
    <source>
        <strain>ATCC 43067 / DSM 2661 / JAL-1 / JCM 10045 / NBRC 100440</strain>
    </source>
</reference>
<reference key="2">
    <citation type="journal article" date="1998" name="Biochemistry">
        <title>Alpha-keto acid chain elongation reactions involved in the biosynthesis of coenzyme B (7-mercaptoheptanoyl threonine phosphate) in methanogenic Archaea.</title>
        <authorList>
            <person name="Howell D.M."/>
            <person name="Harich K."/>
            <person name="Xu H."/>
            <person name="White R.H."/>
        </authorList>
    </citation>
    <scope>FUNCTION</scope>
    <scope>CATALYTIC ACTIVITY</scope>
    <scope>PATHWAY</scope>
</reference>
<dbReference type="EC" id="2.3.3.13"/>
<dbReference type="EMBL" id="L77117">
    <property type="protein sequence ID" value="AAB99199.1"/>
    <property type="molecule type" value="Genomic_DNA"/>
</dbReference>
<dbReference type="PIR" id="B64449">
    <property type="entry name" value="B64449"/>
</dbReference>
<dbReference type="RefSeq" id="WP_010870707.1">
    <property type="nucleotide sequence ID" value="NC_000909.1"/>
</dbReference>
<dbReference type="SMR" id="Q58595"/>
<dbReference type="FunCoup" id="Q58595">
    <property type="interactions" value="242"/>
</dbReference>
<dbReference type="STRING" id="243232.MJ_1195"/>
<dbReference type="PaxDb" id="243232-MJ_1195"/>
<dbReference type="EnsemblBacteria" id="AAB99199">
    <property type="protein sequence ID" value="AAB99199"/>
    <property type="gene ID" value="MJ_1195"/>
</dbReference>
<dbReference type="GeneID" id="1452090"/>
<dbReference type="KEGG" id="mja:MJ_1195"/>
<dbReference type="eggNOG" id="arCOG02092">
    <property type="taxonomic scope" value="Archaea"/>
</dbReference>
<dbReference type="HOGENOM" id="CLU_022158_0_1_2"/>
<dbReference type="InParanoid" id="Q58595"/>
<dbReference type="OrthoDB" id="6555at2157"/>
<dbReference type="PhylomeDB" id="Q58595"/>
<dbReference type="BRENDA" id="2.3.3.13">
    <property type="organism ID" value="3260"/>
</dbReference>
<dbReference type="UniPathway" id="UPA00048">
    <property type="reaction ID" value="UER00070"/>
</dbReference>
<dbReference type="Proteomes" id="UP000000805">
    <property type="component" value="Chromosome"/>
</dbReference>
<dbReference type="GO" id="GO:0003852">
    <property type="term" value="F:2-isopropylmalate synthase activity"/>
    <property type="evidence" value="ECO:0007669"/>
    <property type="project" value="UniProtKB-EC"/>
</dbReference>
<dbReference type="GO" id="GO:0046872">
    <property type="term" value="F:metal ion binding"/>
    <property type="evidence" value="ECO:0007669"/>
    <property type="project" value="UniProtKB-KW"/>
</dbReference>
<dbReference type="GO" id="GO:0019298">
    <property type="term" value="P:coenzyme B biosynthetic process"/>
    <property type="evidence" value="ECO:0000318"/>
    <property type="project" value="GO_Central"/>
</dbReference>
<dbReference type="GO" id="GO:0009098">
    <property type="term" value="P:L-leucine biosynthetic process"/>
    <property type="evidence" value="ECO:0007669"/>
    <property type="project" value="UniProtKB-UniPathway"/>
</dbReference>
<dbReference type="CDD" id="cd07940">
    <property type="entry name" value="DRE_TIM_IPMS"/>
    <property type="match status" value="1"/>
</dbReference>
<dbReference type="FunFam" id="1.10.238.260:FF:000001">
    <property type="entry name" value="2-isopropylmalate synthase"/>
    <property type="match status" value="1"/>
</dbReference>
<dbReference type="FunFam" id="3.20.20.70:FF:000010">
    <property type="entry name" value="2-isopropylmalate synthase"/>
    <property type="match status" value="1"/>
</dbReference>
<dbReference type="FunFam" id="3.30.160.270:FF:000003">
    <property type="entry name" value="2-isopropylmalate synthase"/>
    <property type="match status" value="1"/>
</dbReference>
<dbReference type="Gene3D" id="1.10.238.260">
    <property type="match status" value="1"/>
</dbReference>
<dbReference type="Gene3D" id="3.30.160.270">
    <property type="match status" value="1"/>
</dbReference>
<dbReference type="Gene3D" id="3.20.20.70">
    <property type="entry name" value="Aldolase class I"/>
    <property type="match status" value="1"/>
</dbReference>
<dbReference type="InterPro" id="IPR050073">
    <property type="entry name" value="2-IPM_HCS-like"/>
</dbReference>
<dbReference type="InterPro" id="IPR013709">
    <property type="entry name" value="2-isopropylmalate_synth_dimer"/>
</dbReference>
<dbReference type="InterPro" id="IPR002034">
    <property type="entry name" value="AIPM/Hcit_synth_CS"/>
</dbReference>
<dbReference type="InterPro" id="IPR013785">
    <property type="entry name" value="Aldolase_TIM"/>
</dbReference>
<dbReference type="InterPro" id="IPR011830">
    <property type="entry name" value="LEU1_arch"/>
</dbReference>
<dbReference type="InterPro" id="IPR054691">
    <property type="entry name" value="LeuA/HCS_post-cat"/>
</dbReference>
<dbReference type="InterPro" id="IPR036230">
    <property type="entry name" value="LeuA_allosteric_dom_sf"/>
</dbReference>
<dbReference type="InterPro" id="IPR000891">
    <property type="entry name" value="PYR_CT"/>
</dbReference>
<dbReference type="NCBIfam" id="TIGR02090">
    <property type="entry name" value="LEU1_arch"/>
    <property type="match status" value="1"/>
</dbReference>
<dbReference type="NCBIfam" id="NF002085">
    <property type="entry name" value="PRK00915.1-2"/>
    <property type="match status" value="1"/>
</dbReference>
<dbReference type="NCBIfam" id="NF002086">
    <property type="entry name" value="PRK00915.1-3"/>
    <property type="match status" value="1"/>
</dbReference>
<dbReference type="PANTHER" id="PTHR10277:SF9">
    <property type="entry name" value="2-ISOPROPYLMALATE SYNTHASE 1, CHLOROPLASTIC-RELATED"/>
    <property type="match status" value="1"/>
</dbReference>
<dbReference type="PANTHER" id="PTHR10277">
    <property type="entry name" value="HOMOCITRATE SYNTHASE-RELATED"/>
    <property type="match status" value="1"/>
</dbReference>
<dbReference type="Pfam" id="PF22617">
    <property type="entry name" value="HCS_D2"/>
    <property type="match status" value="1"/>
</dbReference>
<dbReference type="Pfam" id="PF00682">
    <property type="entry name" value="HMGL-like"/>
    <property type="match status" value="1"/>
</dbReference>
<dbReference type="Pfam" id="PF08502">
    <property type="entry name" value="LeuA_dimer"/>
    <property type="match status" value="1"/>
</dbReference>
<dbReference type="SMART" id="SM00917">
    <property type="entry name" value="LeuA_dimer"/>
    <property type="match status" value="1"/>
</dbReference>
<dbReference type="SUPFAM" id="SSF110921">
    <property type="entry name" value="2-isopropylmalate synthase LeuA, allosteric (dimerisation) domain"/>
    <property type="match status" value="1"/>
</dbReference>
<dbReference type="SUPFAM" id="SSF51569">
    <property type="entry name" value="Aldolase"/>
    <property type="match status" value="1"/>
</dbReference>
<dbReference type="PROSITE" id="PS00815">
    <property type="entry name" value="AIPM_HOMOCIT_SYNTH_1"/>
    <property type="match status" value="1"/>
</dbReference>
<dbReference type="PROSITE" id="PS00816">
    <property type="entry name" value="AIPM_HOMOCIT_SYNTH_2"/>
    <property type="match status" value="1"/>
</dbReference>
<dbReference type="PROSITE" id="PS50991">
    <property type="entry name" value="PYR_CT"/>
    <property type="match status" value="1"/>
</dbReference>
<comment type="function">
    <text evidence="4">Catalyzes the condensation of the acetyl group of acetyl-CoA with 3-methyl-2-oxobutanoate (2-oxoisovalerate) to form 3-carboxy-3-hydroxy-4-methylpentanoate (2-isopropylmalate).</text>
</comment>
<comment type="catalytic activity">
    <reaction evidence="4">
        <text>3-methyl-2-oxobutanoate + acetyl-CoA + H2O = (2S)-2-isopropylmalate + CoA + H(+)</text>
        <dbReference type="Rhea" id="RHEA:21524"/>
        <dbReference type="ChEBI" id="CHEBI:1178"/>
        <dbReference type="ChEBI" id="CHEBI:11851"/>
        <dbReference type="ChEBI" id="CHEBI:15377"/>
        <dbReference type="ChEBI" id="CHEBI:15378"/>
        <dbReference type="ChEBI" id="CHEBI:57287"/>
        <dbReference type="ChEBI" id="CHEBI:57288"/>
        <dbReference type="EC" id="2.3.3.13"/>
    </reaction>
</comment>
<comment type="cofactor">
    <cofactor evidence="2">
        <name>a divalent metal cation</name>
        <dbReference type="ChEBI" id="CHEBI:60240"/>
    </cofactor>
</comment>
<comment type="pathway">
    <text evidence="4">Amino-acid biosynthesis; L-leucine biosynthesis; L-leucine from 3-methyl-2-oxobutanoate: step 1/4.</text>
</comment>
<comment type="subunit">
    <text evidence="1">Homodimer.</text>
</comment>
<comment type="similarity">
    <text evidence="5">Belongs to the alpha-IPM synthase/homocitrate synthase family.</text>
</comment>
<name>LEU1_METJA</name>